<proteinExistence type="evidence at transcript level"/>
<gene>
    <name type="primary">OPG083</name>
    <name type="ORF">I7L</name>
</gene>
<comment type="function">
    <text evidence="1 2">Late protein responsible for processing most or all of the viral core and membrane proteins known to undergo morphogenesis-associated proteolysis. These proteolytic events are involved in the transformation of immature virions (IV) into mature virions (MV). Probably cleaves at least the OPG129, OPG136, OPG098, and OPG144 precursors preferentially at Ala-Gly-|-Ala motifs. Also seems to process Ala-Gly-|-Ser and Ala-Gly-|-Thr motifs (By similarity).</text>
</comment>
<comment type="subcellular location">
    <subcellularLocation>
        <location evidence="2">Virion</location>
    </subcellularLocation>
    <text evidence="2">Present in the virion core.</text>
</comment>
<comment type="induction">
    <text>Expressed late in the viral replicative cycle.</text>
</comment>
<comment type="similarity">
    <text evidence="3">Belongs to the peptidase C57 family.</text>
</comment>
<accession>P20501</accession>
<name>PG083_VACCC</name>
<keyword id="KW-0378">Hydrolase</keyword>
<keyword id="KW-0426">Late protein</keyword>
<keyword id="KW-0645">Protease</keyword>
<keyword id="KW-1185">Reference proteome</keyword>
<keyword id="KW-0788">Thiol protease</keyword>
<keyword id="KW-0946">Virion</keyword>
<protein>
    <recommendedName>
        <fullName>Core protease OPG082</fullName>
        <ecNumber evidence="2">3.4.22.-</ecNumber>
    </recommendedName>
    <alternativeName>
        <fullName>Core protease I7</fullName>
        <ecNumber>3.4.22.-</ecNumber>
    </alternativeName>
</protein>
<sequence>MERYTDLVISKIPELGFTNLLCHIYSLAGLCSNIDVSKFLTNCNGYVVEKYDKSTTAGKVSCIPIGMMLELVESGHLSRPNSSDELDQKKELTDELKTRYHSIYDVFELPTSIPLAYFFKPRLREKVSKAIDFSQMDLKIDDLSRKGIHTGENPKVVKMKIEPERGAWMSNRSIKNLVSQFAYGSEVDYIGQFDMRFLNSLAIHEKFDAFMNKHILSYILKDKIKSSTSRFVMFGFCYLSHWKCVIYDKKQCLVSFYDSGGNIPTEFHHYNNFYFYSFSDGFNTNHRHSVLDNTNCDIDVLFRFFECTFGAKIGCINVEVNQLLESECGMFISLFMILCTRTPPKSFKSLKKVYTFFKFLADKKMTLFKSILFNLHDLSLDITETDNAGLKEYKRMEKWTKKSINVICDKLTTKLNRIVDDDE</sequence>
<evidence type="ECO:0000250" key="1"/>
<evidence type="ECO:0000250" key="2">
    <source>
        <dbReference type="UniProtKB" id="P12926"/>
    </source>
</evidence>
<evidence type="ECO:0000305" key="3"/>
<organismHost>
    <name type="scientific">Homo sapiens</name>
    <name type="common">Human</name>
    <dbReference type="NCBI Taxonomy" id="9606"/>
</organismHost>
<dbReference type="EC" id="3.4.22.-" evidence="2"/>
<dbReference type="EMBL" id="M35027">
    <property type="protein sequence ID" value="AAA48063.1"/>
    <property type="molecule type" value="Genomic_DNA"/>
</dbReference>
<dbReference type="PIR" id="C42511">
    <property type="entry name" value="C42511"/>
</dbReference>
<dbReference type="MEROPS" id="C57.001"/>
<dbReference type="Proteomes" id="UP000008269">
    <property type="component" value="Segment"/>
</dbReference>
<dbReference type="GO" id="GO:0044423">
    <property type="term" value="C:virion component"/>
    <property type="evidence" value="ECO:0007669"/>
    <property type="project" value="UniProtKB-KW"/>
</dbReference>
<dbReference type="GO" id="GO:0008234">
    <property type="term" value="F:cysteine-type peptidase activity"/>
    <property type="evidence" value="ECO:0007669"/>
    <property type="project" value="UniProtKB-KW"/>
</dbReference>
<dbReference type="GO" id="GO:0006508">
    <property type="term" value="P:proteolysis"/>
    <property type="evidence" value="ECO:0007669"/>
    <property type="project" value="UniProtKB-KW"/>
</dbReference>
<dbReference type="InterPro" id="IPR038765">
    <property type="entry name" value="Papain-like_cys_pep_sf"/>
</dbReference>
<dbReference type="InterPro" id="IPR004970">
    <property type="entry name" value="Peptidase_C57"/>
</dbReference>
<dbReference type="Pfam" id="PF03290">
    <property type="entry name" value="Peptidase_C57"/>
    <property type="match status" value="1"/>
</dbReference>
<dbReference type="SUPFAM" id="SSF54001">
    <property type="entry name" value="Cysteine proteinases"/>
    <property type="match status" value="1"/>
</dbReference>
<feature type="chain" id="PRO_0000099582" description="Core protease OPG082">
    <location>
        <begin position="1"/>
        <end position="423"/>
    </location>
</feature>
<feature type="active site" evidence="2">
    <location>
        <position position="241"/>
    </location>
</feature>
<feature type="active site" evidence="2">
    <location>
        <position position="248"/>
    </location>
</feature>
<feature type="active site" evidence="2">
    <location>
        <position position="328"/>
    </location>
</feature>
<organism>
    <name type="scientific">Vaccinia virus (strain Copenhagen)</name>
    <name type="common">VACV</name>
    <dbReference type="NCBI Taxonomy" id="10249"/>
    <lineage>
        <taxon>Viruses</taxon>
        <taxon>Varidnaviria</taxon>
        <taxon>Bamfordvirae</taxon>
        <taxon>Nucleocytoviricota</taxon>
        <taxon>Pokkesviricetes</taxon>
        <taxon>Chitovirales</taxon>
        <taxon>Poxviridae</taxon>
        <taxon>Chordopoxvirinae</taxon>
        <taxon>Orthopoxvirus</taxon>
        <taxon>Vaccinia virus</taxon>
    </lineage>
</organism>
<reference key="1">
    <citation type="journal article" date="1990" name="Virology">
        <title>The complete DNA sequence of vaccinia virus.</title>
        <authorList>
            <person name="Goebel S.J."/>
            <person name="Johnson G.P."/>
            <person name="Perkus M.E."/>
            <person name="Davis S.W."/>
            <person name="Winslow J.P."/>
            <person name="Paoletti E."/>
        </authorList>
    </citation>
    <scope>NUCLEOTIDE SEQUENCE [LARGE SCALE GENOMIC DNA]</scope>
</reference>
<reference key="2">
    <citation type="journal article" date="1990" name="Virology">
        <title>Appendix to 'The complete DNA sequence of vaccinia virus'.</title>
        <authorList>
            <person name="Goebel S.J."/>
            <person name="Johnson G.P."/>
            <person name="Perkus M.E."/>
            <person name="Davis S.W."/>
            <person name="Winslow J.P."/>
            <person name="Paoletti E."/>
        </authorList>
    </citation>
    <scope>COMPLETE GENOME</scope>
</reference>